<comment type="function">
    <text evidence="3 4 5 6">Catalyzes the synthesis of activated sulfate. Essential for plant reproduction and viability. Required for the production of glucosinolates.</text>
</comment>
<comment type="catalytic activity">
    <reaction>
        <text>adenosine 5'-phosphosulfate + ATP = 3'-phosphoadenylyl sulfate + ADP + H(+)</text>
        <dbReference type="Rhea" id="RHEA:24152"/>
        <dbReference type="ChEBI" id="CHEBI:15378"/>
        <dbReference type="ChEBI" id="CHEBI:30616"/>
        <dbReference type="ChEBI" id="CHEBI:58243"/>
        <dbReference type="ChEBI" id="CHEBI:58339"/>
        <dbReference type="ChEBI" id="CHEBI:456216"/>
        <dbReference type="EC" id="2.7.1.25"/>
    </reaction>
</comment>
<comment type="biophysicochemical properties">
    <kinetics>
        <KM evidence="4">1 uM for adenylyl sulfate</KM>
        <Vmax evidence="4">10.6 mmol/min/mg enzyme</Vmax>
    </kinetics>
</comment>
<comment type="pathway">
    <text>Sulfur metabolism; hydrogen sulfide biosynthesis; sulfite from sulfate: step 2/3.</text>
</comment>
<comment type="subunit">
    <text evidence="3">Interacts with APK1.</text>
</comment>
<comment type="subcellular location">
    <subcellularLocation>
        <location evidence="4">Plastid</location>
        <location evidence="4">Chloroplast</location>
    </subcellularLocation>
</comment>
<comment type="tissue specificity">
    <text evidence="4">Expressed in root vasculature, root tips, leaf epidermal cells and funiculus of developing seeds.</text>
</comment>
<comment type="disruption phenotype">
    <text evidence="4 5">No visible phenotype under normal growth conditions. Apk1 and apk2 double mutant exhibits a semi-dwarf phenotype.</text>
</comment>
<comment type="similarity">
    <text evidence="7">Belongs to the APS kinase family.</text>
</comment>
<dbReference type="EC" id="2.7.1.25"/>
<dbReference type="EMBL" id="AF043351">
    <property type="protein sequence ID" value="AAC39520.1"/>
    <property type="molecule type" value="mRNA"/>
</dbReference>
<dbReference type="EMBL" id="AL035708">
    <property type="protein sequence ID" value="CAB38907.1"/>
    <property type="molecule type" value="Genomic_DNA"/>
</dbReference>
<dbReference type="EMBL" id="AL161596">
    <property type="protein sequence ID" value="CAB80657.1"/>
    <property type="molecule type" value="Genomic_DNA"/>
</dbReference>
<dbReference type="EMBL" id="CP002687">
    <property type="protein sequence ID" value="AEE87142.1"/>
    <property type="molecule type" value="Genomic_DNA"/>
</dbReference>
<dbReference type="EMBL" id="AF462823">
    <property type="protein sequence ID" value="AAL58913.1"/>
    <property type="molecule type" value="mRNA"/>
</dbReference>
<dbReference type="EMBL" id="AY097421">
    <property type="protein sequence ID" value="AAM19937.1"/>
    <property type="molecule type" value="mRNA"/>
</dbReference>
<dbReference type="PIR" id="T06100">
    <property type="entry name" value="T06100"/>
</dbReference>
<dbReference type="RefSeq" id="NP_195704.1">
    <property type="nucleotide sequence ID" value="NM_120157.4"/>
</dbReference>
<dbReference type="SMR" id="O49196"/>
<dbReference type="BioGRID" id="15433">
    <property type="interactions" value="1"/>
</dbReference>
<dbReference type="FunCoup" id="O49196">
    <property type="interactions" value="57"/>
</dbReference>
<dbReference type="IntAct" id="O49196">
    <property type="interactions" value="3"/>
</dbReference>
<dbReference type="STRING" id="3702.O49196"/>
<dbReference type="PaxDb" id="3702-AT4G39940.1"/>
<dbReference type="ProteomicsDB" id="246950"/>
<dbReference type="EnsemblPlants" id="AT4G39940.1">
    <property type="protein sequence ID" value="AT4G39940.1"/>
    <property type="gene ID" value="AT4G39940"/>
</dbReference>
<dbReference type="GeneID" id="830153"/>
<dbReference type="Gramene" id="AT4G39940.1">
    <property type="protein sequence ID" value="AT4G39940.1"/>
    <property type="gene ID" value="AT4G39940"/>
</dbReference>
<dbReference type="KEGG" id="ath:AT4G39940"/>
<dbReference type="Araport" id="AT4G39940"/>
<dbReference type="TAIR" id="AT4G39940">
    <property type="gene designation" value="AKN2"/>
</dbReference>
<dbReference type="eggNOG" id="KOG0635">
    <property type="taxonomic scope" value="Eukaryota"/>
</dbReference>
<dbReference type="HOGENOM" id="CLU_046932_0_2_1"/>
<dbReference type="InParanoid" id="O49196"/>
<dbReference type="OMA" id="HVCESRD"/>
<dbReference type="OrthoDB" id="506431at2759"/>
<dbReference type="PhylomeDB" id="O49196"/>
<dbReference type="BioCyc" id="ARA:AT4G39940-MONOMER"/>
<dbReference type="BioCyc" id="MetaCyc:AT4G39940-MONOMER"/>
<dbReference type="BRENDA" id="2.7.1.25">
    <property type="organism ID" value="399"/>
</dbReference>
<dbReference type="SABIO-RK" id="O49196"/>
<dbReference type="UniPathway" id="UPA00140">
    <property type="reaction ID" value="UER00205"/>
</dbReference>
<dbReference type="PRO" id="PR:O49196"/>
<dbReference type="Proteomes" id="UP000006548">
    <property type="component" value="Chromosome 4"/>
</dbReference>
<dbReference type="ExpressionAtlas" id="O49196">
    <property type="expression patterns" value="baseline and differential"/>
</dbReference>
<dbReference type="GO" id="GO:0009507">
    <property type="term" value="C:chloroplast"/>
    <property type="evidence" value="ECO:0000314"/>
    <property type="project" value="TAIR"/>
</dbReference>
<dbReference type="GO" id="GO:0009536">
    <property type="term" value="C:plastid"/>
    <property type="evidence" value="ECO:0000304"/>
    <property type="project" value="TAIR"/>
</dbReference>
<dbReference type="GO" id="GO:0004020">
    <property type="term" value="F:adenylylsulfate kinase activity"/>
    <property type="evidence" value="ECO:0007669"/>
    <property type="project" value="UniProtKB-EC"/>
</dbReference>
<dbReference type="GO" id="GO:0005524">
    <property type="term" value="F:ATP binding"/>
    <property type="evidence" value="ECO:0007669"/>
    <property type="project" value="UniProtKB-KW"/>
</dbReference>
<dbReference type="GO" id="GO:0019344">
    <property type="term" value="P:cysteine biosynthetic process"/>
    <property type="evidence" value="ECO:0007669"/>
    <property type="project" value="UniProtKB-KW"/>
</dbReference>
<dbReference type="GO" id="GO:0070814">
    <property type="term" value="P:hydrogen sulfide biosynthetic process"/>
    <property type="evidence" value="ECO:0007669"/>
    <property type="project" value="UniProtKB-UniPathway"/>
</dbReference>
<dbReference type="GO" id="GO:0000103">
    <property type="term" value="P:sulfate assimilation"/>
    <property type="evidence" value="ECO:0007669"/>
    <property type="project" value="InterPro"/>
</dbReference>
<dbReference type="CDD" id="cd02027">
    <property type="entry name" value="APSK"/>
    <property type="match status" value="1"/>
</dbReference>
<dbReference type="FunFam" id="3.40.50.300:FF:001937">
    <property type="entry name" value="Adenylyl-sulfate kinase"/>
    <property type="match status" value="1"/>
</dbReference>
<dbReference type="Gene3D" id="3.40.50.300">
    <property type="entry name" value="P-loop containing nucleotide triphosphate hydrolases"/>
    <property type="match status" value="1"/>
</dbReference>
<dbReference type="HAMAP" id="MF_00065">
    <property type="entry name" value="Adenylyl_sulf_kinase"/>
    <property type="match status" value="1"/>
</dbReference>
<dbReference type="InterPro" id="IPR002891">
    <property type="entry name" value="APS_kinase"/>
</dbReference>
<dbReference type="InterPro" id="IPR027417">
    <property type="entry name" value="P-loop_NTPase"/>
</dbReference>
<dbReference type="NCBIfam" id="TIGR00455">
    <property type="entry name" value="apsK"/>
    <property type="match status" value="1"/>
</dbReference>
<dbReference type="NCBIfam" id="NF003013">
    <property type="entry name" value="PRK03846.1"/>
    <property type="match status" value="1"/>
</dbReference>
<dbReference type="PANTHER" id="PTHR11055:SF53">
    <property type="entry name" value="ADENYLYL-SULFATE KINASE 2, CHLOROPLASTIC"/>
    <property type="match status" value="1"/>
</dbReference>
<dbReference type="PANTHER" id="PTHR11055">
    <property type="entry name" value="BIFUNCTIONAL 3'-PHOSPHOADENOSINE 5'-PHOSPHOSULFATE SYNTHASE"/>
    <property type="match status" value="1"/>
</dbReference>
<dbReference type="Pfam" id="PF01583">
    <property type="entry name" value="APS_kinase"/>
    <property type="match status" value="1"/>
</dbReference>
<dbReference type="SUPFAM" id="SSF52540">
    <property type="entry name" value="P-loop containing nucleoside triphosphate hydrolases"/>
    <property type="match status" value="1"/>
</dbReference>
<sequence>MEGLAIRASRPSVFCSIPGLGGDSHRKPPSDGFLKLPASSIPADSRKLVANSTSFHPISAVNVSAQASLTADFPALSETILKEGRNNGKEKAENIVWHESSICRCDRQQLLQQKGCVVWITGLSGSGKSTVACALSKALFERGKLTYTLDGDNVRHGLNRDLTFKAEHRTENIRRIGEVAKLFADVGVICIASLISPYRRDRDACRSLLPDGDFVEVFMDVPLHVCESRDPKGLYKLARAGKIKGFTGIDDPYEAPVNCEVVLKHTGDDESCSPRQMAENIISYLQNKGYLEG</sequence>
<name>APK2_ARATH</name>
<reference key="1">
    <citation type="online journal article" date="1998" name="Plant Gene Register">
        <title>Isolation of cDNA clones encoding adenosine-5'-phosphosulfate-kinase (EC 2.7.1.25) from Catharanthus roseus and an isoform (akn2) from Arabidopsis.</title>
        <authorList>
            <person name="Schiffmann S."/>
            <person name="Schwenn J.-D."/>
        </authorList>
        <locator>PGR98-116</locator>
    </citation>
    <scope>NUCLEOTIDE SEQUENCE [MRNA]</scope>
    <source>
        <strain>cv. Columbia</strain>
    </source>
</reference>
<reference key="2">
    <citation type="journal article" date="1999" name="Nature">
        <title>Sequence and analysis of chromosome 4 of the plant Arabidopsis thaliana.</title>
        <authorList>
            <person name="Mayer K.F.X."/>
            <person name="Schueller C."/>
            <person name="Wambutt R."/>
            <person name="Murphy G."/>
            <person name="Volckaert G."/>
            <person name="Pohl T."/>
            <person name="Duesterhoeft A."/>
            <person name="Stiekema W."/>
            <person name="Entian K.-D."/>
            <person name="Terryn N."/>
            <person name="Harris B."/>
            <person name="Ansorge W."/>
            <person name="Brandt P."/>
            <person name="Grivell L.A."/>
            <person name="Rieger M."/>
            <person name="Weichselgartner M."/>
            <person name="de Simone V."/>
            <person name="Obermaier B."/>
            <person name="Mache R."/>
            <person name="Mueller M."/>
            <person name="Kreis M."/>
            <person name="Delseny M."/>
            <person name="Puigdomenech P."/>
            <person name="Watson M."/>
            <person name="Schmidtheini T."/>
            <person name="Reichert B."/>
            <person name="Portetelle D."/>
            <person name="Perez-Alonso M."/>
            <person name="Boutry M."/>
            <person name="Bancroft I."/>
            <person name="Vos P."/>
            <person name="Hoheisel J."/>
            <person name="Zimmermann W."/>
            <person name="Wedler H."/>
            <person name="Ridley P."/>
            <person name="Langham S.-A."/>
            <person name="McCullagh B."/>
            <person name="Bilham L."/>
            <person name="Robben J."/>
            <person name="van der Schueren J."/>
            <person name="Grymonprez B."/>
            <person name="Chuang Y.-J."/>
            <person name="Vandenbussche F."/>
            <person name="Braeken M."/>
            <person name="Weltjens I."/>
            <person name="Voet M."/>
            <person name="Bastiaens I."/>
            <person name="Aert R."/>
            <person name="Defoor E."/>
            <person name="Weitzenegger T."/>
            <person name="Bothe G."/>
            <person name="Ramsperger U."/>
            <person name="Hilbert H."/>
            <person name="Braun M."/>
            <person name="Holzer E."/>
            <person name="Brandt A."/>
            <person name="Peters S."/>
            <person name="van Staveren M."/>
            <person name="Dirkse W."/>
            <person name="Mooijman P."/>
            <person name="Klein Lankhorst R."/>
            <person name="Rose M."/>
            <person name="Hauf J."/>
            <person name="Koetter P."/>
            <person name="Berneiser S."/>
            <person name="Hempel S."/>
            <person name="Feldpausch M."/>
            <person name="Lamberth S."/>
            <person name="Van den Daele H."/>
            <person name="De Keyser A."/>
            <person name="Buysshaert C."/>
            <person name="Gielen J."/>
            <person name="Villarroel R."/>
            <person name="De Clercq R."/>
            <person name="van Montagu M."/>
            <person name="Rogers J."/>
            <person name="Cronin A."/>
            <person name="Quail M.A."/>
            <person name="Bray-Allen S."/>
            <person name="Clark L."/>
            <person name="Doggett J."/>
            <person name="Hall S."/>
            <person name="Kay M."/>
            <person name="Lennard N."/>
            <person name="McLay K."/>
            <person name="Mayes R."/>
            <person name="Pettett A."/>
            <person name="Rajandream M.A."/>
            <person name="Lyne M."/>
            <person name="Benes V."/>
            <person name="Rechmann S."/>
            <person name="Borkova D."/>
            <person name="Bloecker H."/>
            <person name="Scharfe M."/>
            <person name="Grimm M."/>
            <person name="Loehnert T.-H."/>
            <person name="Dose S."/>
            <person name="de Haan M."/>
            <person name="Maarse A.C."/>
            <person name="Schaefer M."/>
            <person name="Mueller-Auer S."/>
            <person name="Gabel C."/>
            <person name="Fuchs M."/>
            <person name="Fartmann B."/>
            <person name="Granderath K."/>
            <person name="Dauner D."/>
            <person name="Herzl A."/>
            <person name="Neumann S."/>
            <person name="Argiriou A."/>
            <person name="Vitale D."/>
            <person name="Liguori R."/>
            <person name="Piravandi E."/>
            <person name="Massenet O."/>
            <person name="Quigley F."/>
            <person name="Clabauld G."/>
            <person name="Muendlein A."/>
            <person name="Felber R."/>
            <person name="Schnabl S."/>
            <person name="Hiller R."/>
            <person name="Schmidt W."/>
            <person name="Lecharny A."/>
            <person name="Aubourg S."/>
            <person name="Chefdor F."/>
            <person name="Cooke R."/>
            <person name="Berger C."/>
            <person name="Monfort A."/>
            <person name="Casacuberta E."/>
            <person name="Gibbons T."/>
            <person name="Weber N."/>
            <person name="Vandenbol M."/>
            <person name="Bargues M."/>
            <person name="Terol J."/>
            <person name="Torres A."/>
            <person name="Perez-Perez A."/>
            <person name="Purnelle B."/>
            <person name="Bent E."/>
            <person name="Johnson S."/>
            <person name="Tacon D."/>
            <person name="Jesse T."/>
            <person name="Heijnen L."/>
            <person name="Schwarz S."/>
            <person name="Scholler P."/>
            <person name="Heber S."/>
            <person name="Francs P."/>
            <person name="Bielke C."/>
            <person name="Frishman D."/>
            <person name="Haase D."/>
            <person name="Lemcke K."/>
            <person name="Mewes H.-W."/>
            <person name="Stocker S."/>
            <person name="Zaccaria P."/>
            <person name="Bevan M."/>
            <person name="Wilson R.K."/>
            <person name="de la Bastide M."/>
            <person name="Habermann K."/>
            <person name="Parnell L."/>
            <person name="Dedhia N."/>
            <person name="Gnoj L."/>
            <person name="Schutz K."/>
            <person name="Huang E."/>
            <person name="Spiegel L."/>
            <person name="Sekhon M."/>
            <person name="Murray J."/>
            <person name="Sheet P."/>
            <person name="Cordes M."/>
            <person name="Abu-Threideh J."/>
            <person name="Stoneking T."/>
            <person name="Kalicki J."/>
            <person name="Graves T."/>
            <person name="Harmon G."/>
            <person name="Edwards J."/>
            <person name="Latreille P."/>
            <person name="Courtney L."/>
            <person name="Cloud J."/>
            <person name="Abbott A."/>
            <person name="Scott K."/>
            <person name="Johnson D."/>
            <person name="Minx P."/>
            <person name="Bentley D."/>
            <person name="Fulton B."/>
            <person name="Miller N."/>
            <person name="Greco T."/>
            <person name="Kemp K."/>
            <person name="Kramer J."/>
            <person name="Fulton L."/>
            <person name="Mardis E."/>
            <person name="Dante M."/>
            <person name="Pepin K."/>
            <person name="Hillier L.W."/>
            <person name="Nelson J."/>
            <person name="Spieth J."/>
            <person name="Ryan E."/>
            <person name="Andrews S."/>
            <person name="Geisel C."/>
            <person name="Layman D."/>
            <person name="Du H."/>
            <person name="Ali J."/>
            <person name="Berghoff A."/>
            <person name="Jones K."/>
            <person name="Drone K."/>
            <person name="Cotton M."/>
            <person name="Joshu C."/>
            <person name="Antonoiu B."/>
            <person name="Zidanic M."/>
            <person name="Strong C."/>
            <person name="Sun H."/>
            <person name="Lamar B."/>
            <person name="Yordan C."/>
            <person name="Ma P."/>
            <person name="Zhong J."/>
            <person name="Preston R."/>
            <person name="Vil D."/>
            <person name="Shekher M."/>
            <person name="Matero A."/>
            <person name="Shah R."/>
            <person name="Swaby I.K."/>
            <person name="O'Shaughnessy A."/>
            <person name="Rodriguez M."/>
            <person name="Hoffman J."/>
            <person name="Till S."/>
            <person name="Granat S."/>
            <person name="Shohdy N."/>
            <person name="Hasegawa A."/>
            <person name="Hameed A."/>
            <person name="Lodhi M."/>
            <person name="Johnson A."/>
            <person name="Chen E."/>
            <person name="Marra M.A."/>
            <person name="Martienssen R."/>
            <person name="McCombie W.R."/>
        </authorList>
    </citation>
    <scope>NUCLEOTIDE SEQUENCE [LARGE SCALE GENOMIC DNA]</scope>
    <source>
        <strain>cv. Columbia</strain>
    </source>
</reference>
<reference key="3">
    <citation type="journal article" date="2017" name="Plant J.">
        <title>Araport11: a complete reannotation of the Arabidopsis thaliana reference genome.</title>
        <authorList>
            <person name="Cheng C.Y."/>
            <person name="Krishnakumar V."/>
            <person name="Chan A.P."/>
            <person name="Thibaud-Nissen F."/>
            <person name="Schobel S."/>
            <person name="Town C.D."/>
        </authorList>
    </citation>
    <scope>GENOME REANNOTATION</scope>
    <source>
        <strain>cv. Columbia</strain>
    </source>
</reference>
<reference key="4">
    <citation type="journal article" date="2003" name="Science">
        <title>Empirical analysis of transcriptional activity in the Arabidopsis genome.</title>
        <authorList>
            <person name="Yamada K."/>
            <person name="Lim J."/>
            <person name="Dale J.M."/>
            <person name="Chen H."/>
            <person name="Shinn P."/>
            <person name="Palm C.J."/>
            <person name="Southwick A.M."/>
            <person name="Wu H.C."/>
            <person name="Kim C.J."/>
            <person name="Nguyen M."/>
            <person name="Pham P.K."/>
            <person name="Cheuk R.F."/>
            <person name="Karlin-Newmann G."/>
            <person name="Liu S.X."/>
            <person name="Lam B."/>
            <person name="Sakano H."/>
            <person name="Wu T."/>
            <person name="Yu G."/>
            <person name="Miranda M."/>
            <person name="Quach H.L."/>
            <person name="Tripp M."/>
            <person name="Chang C.H."/>
            <person name="Lee J.M."/>
            <person name="Toriumi M.J."/>
            <person name="Chan M.M."/>
            <person name="Tang C.C."/>
            <person name="Onodera C.S."/>
            <person name="Deng J.M."/>
            <person name="Akiyama K."/>
            <person name="Ansari Y."/>
            <person name="Arakawa T."/>
            <person name="Banh J."/>
            <person name="Banno F."/>
            <person name="Bowser L."/>
            <person name="Brooks S.Y."/>
            <person name="Carninci P."/>
            <person name="Chao Q."/>
            <person name="Choy N."/>
            <person name="Enju A."/>
            <person name="Goldsmith A.D."/>
            <person name="Gurjal M."/>
            <person name="Hansen N.F."/>
            <person name="Hayashizaki Y."/>
            <person name="Johnson-Hopson C."/>
            <person name="Hsuan V.W."/>
            <person name="Iida K."/>
            <person name="Karnes M."/>
            <person name="Khan S."/>
            <person name="Koesema E."/>
            <person name="Ishida J."/>
            <person name="Jiang P.X."/>
            <person name="Jones T."/>
            <person name="Kawai J."/>
            <person name="Kamiya A."/>
            <person name="Meyers C."/>
            <person name="Nakajima M."/>
            <person name="Narusaka M."/>
            <person name="Seki M."/>
            <person name="Sakurai T."/>
            <person name="Satou M."/>
            <person name="Tamse R."/>
            <person name="Vaysberg M."/>
            <person name="Wallender E.K."/>
            <person name="Wong C."/>
            <person name="Yamamura Y."/>
            <person name="Yuan S."/>
            <person name="Shinozaki K."/>
            <person name="Davis R.W."/>
            <person name="Theologis A."/>
            <person name="Ecker J.R."/>
        </authorList>
    </citation>
    <scope>NUCLEOTIDE SEQUENCE [LARGE SCALE MRNA]</scope>
    <source>
        <strain>cv. Columbia</strain>
    </source>
</reference>
<reference key="5">
    <citation type="journal article" date="2001" name="Arch. Biochem. Biophys.">
        <title>Molecular and catalytic properties of Arabidopsis thaliana adenylyl sulfate (APS)-kinase.</title>
        <authorList>
            <person name="Lillig C.H."/>
            <person name="Schiffmann S."/>
            <person name="Berndt C."/>
            <person name="Berken A."/>
            <person name="Tischka R."/>
            <person name="Schwenn J.D."/>
        </authorList>
    </citation>
    <scope>FUNCTION</scope>
    <scope>INTERACTION WITH AKN1</scope>
</reference>
<reference key="6">
    <citation type="journal article" date="2009" name="Plant Cell">
        <title>Disruption of adenosine-5'-phosphosulfate kinase in Arabidopsis reduces levels of sulfated secondary metabolites.</title>
        <authorList>
            <person name="Mugford S.G."/>
            <person name="Yoshimoto N."/>
            <person name="Reichelt M."/>
            <person name="Wirtz M."/>
            <person name="Hill L."/>
            <person name="Mugford S.T."/>
            <person name="Nakazato Y."/>
            <person name="Noji M."/>
            <person name="Takahashi H."/>
            <person name="Kramell R."/>
            <person name="Gigolashvili T."/>
            <person name="Fluegge U.I."/>
            <person name="Wasternack C."/>
            <person name="Gershenzon J."/>
            <person name="Hell R."/>
            <person name="Saito K."/>
            <person name="Kopriva S."/>
        </authorList>
    </citation>
    <scope>FUNCTION</scope>
    <scope>BIOPHYSICOCHEMICAL PROPERTIES</scope>
    <scope>SUBCELLULAR LOCATION</scope>
    <scope>TISSUE SPECIFICITY</scope>
    <scope>DISRUPTION PHENOTYPE</scope>
</reference>
<reference key="7">
    <citation type="journal article" date="2010" name="FEBS Lett.">
        <title>Adenosine-5'-phosphosulfate kinase is essential for Arabidopsis viability.</title>
        <authorList>
            <person name="Mugford S.G."/>
            <person name="Matthewman C.A."/>
            <person name="Hill L."/>
            <person name="Kopriva S."/>
        </authorList>
    </citation>
    <scope>FUNCTION</scope>
    <scope>DISRUPTION PHENOTYPE</scope>
</reference>
<reference key="8">
    <citation type="journal article" date="2013" name="Phytochemistry">
        <title>Interaction of glucosinolate content of Arabidopsis thaliana mutant lines and feeding and oviposition by generalist and specialist lepidopterans.</title>
        <authorList>
            <person name="Badenes-Perez F.R."/>
            <person name="Reichelt M."/>
            <person name="Gershenzon J."/>
            <person name="Heckel D.G."/>
        </authorList>
    </citation>
    <scope>FUNCTION</scope>
</reference>
<proteinExistence type="evidence at protein level"/>
<protein>
    <recommendedName>
        <fullName>Adenylyl-sulfate kinase 2, chloroplastic</fullName>
        <ecNumber>2.7.1.25</ecNumber>
    </recommendedName>
    <alternativeName>
        <fullName>ATP adenosine-5'-phosphosulfate 3'-phosphotransferase 2</fullName>
    </alternativeName>
    <alternativeName>
        <fullName>Adenosine-5'-phosphosulfate kinase 2</fullName>
        <shortName>APS kinase 2</shortName>
    </alternativeName>
</protein>
<accession>O49196</accession>
<feature type="transit peptide" description="Chloroplast" evidence="2">
    <location>
        <begin position="1"/>
        <end position="59"/>
    </location>
</feature>
<feature type="chain" id="PRO_0000006636" description="Adenylyl-sulfate kinase 2, chloroplastic">
    <location>
        <begin position="60"/>
        <end position="293"/>
    </location>
</feature>
<feature type="active site" description="Phosphoserine intermediate" evidence="1">
    <location>
        <position position="196"/>
    </location>
</feature>
<feature type="binding site" evidence="1">
    <location>
        <begin position="122"/>
        <end position="130"/>
    </location>
    <ligand>
        <name>ATP</name>
        <dbReference type="ChEBI" id="CHEBI:30616"/>
    </ligand>
</feature>
<feature type="binding site" evidence="1">
    <location>
        <position position="152"/>
    </location>
    <ligand>
        <name>substrate</name>
    </ligand>
</feature>
<feature type="binding site" evidence="1">
    <location>
        <position position="155"/>
    </location>
    <ligand>
        <name>substrate</name>
    </ligand>
</feature>
<feature type="binding site" evidence="1">
    <location>
        <position position="169"/>
    </location>
    <ligand>
        <name>substrate</name>
    </ligand>
</feature>
<feature type="binding site" evidence="1">
    <location>
        <position position="172"/>
    </location>
    <ligand>
        <name>substrate</name>
    </ligand>
</feature>
<feature type="binding site" evidence="1">
    <location>
        <begin position="195"/>
        <end position="196"/>
    </location>
    <ligand>
        <name>substrate</name>
    </ligand>
</feature>
<feature type="binding site" evidence="1">
    <location>
        <position position="245"/>
    </location>
    <ligand>
        <name>substrate</name>
    </ligand>
</feature>
<feature type="site" description="Participates in a stacking interaction with the adenine ring of adenylyl-sulfate" evidence="1">
    <location>
        <position position="164"/>
    </location>
</feature>
<keyword id="KW-0028">Amino-acid biosynthesis</keyword>
<keyword id="KW-0067">ATP-binding</keyword>
<keyword id="KW-0150">Chloroplast</keyword>
<keyword id="KW-0198">Cysteine biosynthesis</keyword>
<keyword id="KW-0418">Kinase</keyword>
<keyword id="KW-0547">Nucleotide-binding</keyword>
<keyword id="KW-0934">Plastid</keyword>
<keyword id="KW-1185">Reference proteome</keyword>
<keyword id="KW-0808">Transferase</keyword>
<keyword id="KW-0809">Transit peptide</keyword>
<gene>
    <name type="primary">APK2</name>
    <name type="synonym">AKN2</name>
    <name type="ordered locus">At4g39940</name>
    <name type="ORF">T5J17.110</name>
</gene>
<evidence type="ECO:0000250" key="1"/>
<evidence type="ECO:0000255" key="2"/>
<evidence type="ECO:0000269" key="3">
    <source>
    </source>
</evidence>
<evidence type="ECO:0000269" key="4">
    <source>
    </source>
</evidence>
<evidence type="ECO:0000269" key="5">
    <source>
    </source>
</evidence>
<evidence type="ECO:0000269" key="6">
    <source>
    </source>
</evidence>
<evidence type="ECO:0000305" key="7"/>
<organism>
    <name type="scientific">Arabidopsis thaliana</name>
    <name type="common">Mouse-ear cress</name>
    <dbReference type="NCBI Taxonomy" id="3702"/>
    <lineage>
        <taxon>Eukaryota</taxon>
        <taxon>Viridiplantae</taxon>
        <taxon>Streptophyta</taxon>
        <taxon>Embryophyta</taxon>
        <taxon>Tracheophyta</taxon>
        <taxon>Spermatophyta</taxon>
        <taxon>Magnoliopsida</taxon>
        <taxon>eudicotyledons</taxon>
        <taxon>Gunneridae</taxon>
        <taxon>Pentapetalae</taxon>
        <taxon>rosids</taxon>
        <taxon>malvids</taxon>
        <taxon>Brassicales</taxon>
        <taxon>Brassicaceae</taxon>
        <taxon>Camelineae</taxon>
        <taxon>Arabidopsis</taxon>
    </lineage>
</organism>